<reference key="1">
    <citation type="journal article" date="2008" name="BMC Genomics">
        <title>Comparative genomic analysis of the gut bacterium Bifidobacterium longum reveals loci susceptible to deletion during pure culture growth.</title>
        <authorList>
            <person name="Lee J.H."/>
            <person name="Karamychev V.N."/>
            <person name="Kozyavkin S.A."/>
            <person name="Mills D."/>
            <person name="Pavlov A.R."/>
            <person name="Pavlova N.V."/>
            <person name="Polouchine N.N."/>
            <person name="Richardson P.M."/>
            <person name="Shakhova V.V."/>
            <person name="Slesarev A.I."/>
            <person name="Weimer B."/>
            <person name="O'Sullivan D.J."/>
        </authorList>
    </citation>
    <scope>NUCLEOTIDE SEQUENCE [LARGE SCALE GENOMIC DNA]</scope>
    <source>
        <strain>DJO10A</strain>
    </source>
</reference>
<protein>
    <recommendedName>
        <fullName evidence="1">Large ribosomal subunit protein uL22</fullName>
    </recommendedName>
    <alternativeName>
        <fullName evidence="2">50S ribosomal protein L22</fullName>
    </alternativeName>
</protein>
<feature type="chain" id="PRO_1000142233" description="Large ribosomal subunit protein uL22">
    <location>
        <begin position="1"/>
        <end position="119"/>
    </location>
</feature>
<name>RL22_BIFLD</name>
<accession>B3DQB9</accession>
<organism>
    <name type="scientific">Bifidobacterium longum (strain DJO10A)</name>
    <dbReference type="NCBI Taxonomy" id="205913"/>
    <lineage>
        <taxon>Bacteria</taxon>
        <taxon>Bacillati</taxon>
        <taxon>Actinomycetota</taxon>
        <taxon>Actinomycetes</taxon>
        <taxon>Bifidobacteriales</taxon>
        <taxon>Bifidobacteriaceae</taxon>
        <taxon>Bifidobacterium</taxon>
    </lineage>
</organism>
<evidence type="ECO:0000255" key="1">
    <source>
        <dbReference type="HAMAP-Rule" id="MF_01331"/>
    </source>
</evidence>
<evidence type="ECO:0000305" key="2"/>
<dbReference type="EMBL" id="CP000605">
    <property type="protein sequence ID" value="ACD99157.1"/>
    <property type="molecule type" value="Genomic_DNA"/>
</dbReference>
<dbReference type="RefSeq" id="WP_007053035.1">
    <property type="nucleotide sequence ID" value="NZ_AABM02000025.1"/>
</dbReference>
<dbReference type="SMR" id="B3DQB9"/>
<dbReference type="GeneID" id="69578892"/>
<dbReference type="KEGG" id="blj:BLD_1712"/>
<dbReference type="HOGENOM" id="CLU_083987_3_3_11"/>
<dbReference type="Proteomes" id="UP000002419">
    <property type="component" value="Chromosome"/>
</dbReference>
<dbReference type="GO" id="GO:0022625">
    <property type="term" value="C:cytosolic large ribosomal subunit"/>
    <property type="evidence" value="ECO:0007669"/>
    <property type="project" value="TreeGrafter"/>
</dbReference>
<dbReference type="GO" id="GO:0019843">
    <property type="term" value="F:rRNA binding"/>
    <property type="evidence" value="ECO:0007669"/>
    <property type="project" value="UniProtKB-UniRule"/>
</dbReference>
<dbReference type="GO" id="GO:0003735">
    <property type="term" value="F:structural constituent of ribosome"/>
    <property type="evidence" value="ECO:0007669"/>
    <property type="project" value="InterPro"/>
</dbReference>
<dbReference type="GO" id="GO:0006412">
    <property type="term" value="P:translation"/>
    <property type="evidence" value="ECO:0007669"/>
    <property type="project" value="UniProtKB-UniRule"/>
</dbReference>
<dbReference type="CDD" id="cd00336">
    <property type="entry name" value="Ribosomal_L22"/>
    <property type="match status" value="1"/>
</dbReference>
<dbReference type="Gene3D" id="3.90.470.10">
    <property type="entry name" value="Ribosomal protein L22/L17"/>
    <property type="match status" value="1"/>
</dbReference>
<dbReference type="HAMAP" id="MF_01331_B">
    <property type="entry name" value="Ribosomal_uL22_B"/>
    <property type="match status" value="1"/>
</dbReference>
<dbReference type="InterPro" id="IPR001063">
    <property type="entry name" value="Ribosomal_uL22"/>
</dbReference>
<dbReference type="InterPro" id="IPR005727">
    <property type="entry name" value="Ribosomal_uL22_bac/chlpt-type"/>
</dbReference>
<dbReference type="InterPro" id="IPR047867">
    <property type="entry name" value="Ribosomal_uL22_bac/org-type"/>
</dbReference>
<dbReference type="InterPro" id="IPR018260">
    <property type="entry name" value="Ribosomal_uL22_CS"/>
</dbReference>
<dbReference type="InterPro" id="IPR036394">
    <property type="entry name" value="Ribosomal_uL22_sf"/>
</dbReference>
<dbReference type="NCBIfam" id="TIGR01044">
    <property type="entry name" value="rplV_bact"/>
    <property type="match status" value="1"/>
</dbReference>
<dbReference type="PANTHER" id="PTHR13501">
    <property type="entry name" value="CHLOROPLAST 50S RIBOSOMAL PROTEIN L22-RELATED"/>
    <property type="match status" value="1"/>
</dbReference>
<dbReference type="PANTHER" id="PTHR13501:SF8">
    <property type="entry name" value="LARGE RIBOSOMAL SUBUNIT PROTEIN UL22M"/>
    <property type="match status" value="1"/>
</dbReference>
<dbReference type="Pfam" id="PF00237">
    <property type="entry name" value="Ribosomal_L22"/>
    <property type="match status" value="1"/>
</dbReference>
<dbReference type="SUPFAM" id="SSF54843">
    <property type="entry name" value="Ribosomal protein L22"/>
    <property type="match status" value="1"/>
</dbReference>
<dbReference type="PROSITE" id="PS00464">
    <property type="entry name" value="RIBOSOMAL_L22"/>
    <property type="match status" value="1"/>
</dbReference>
<proteinExistence type="inferred from homology"/>
<keyword id="KW-0687">Ribonucleoprotein</keyword>
<keyword id="KW-0689">Ribosomal protein</keyword>
<keyword id="KW-0694">RNA-binding</keyword>
<keyword id="KW-0699">rRNA-binding</keyword>
<gene>
    <name evidence="1" type="primary">rplV</name>
    <name type="ordered locus">BLD_1712</name>
</gene>
<sequence>MEAKAIARHVRVTPRKARRMVDLIRGKKATEAVTILKFAPQAAALPVRKTLESAIANARVKADKAGEPFRENDLYIKETYVDEGVTLKRFRARAQGRAARINKRTSHITVVVANKEGAR</sequence>
<comment type="function">
    <text evidence="1">This protein binds specifically to 23S rRNA; its binding is stimulated by other ribosomal proteins, e.g. L4, L17, and L20. It is important during the early stages of 50S assembly. It makes multiple contacts with different domains of the 23S rRNA in the assembled 50S subunit and ribosome (By similarity).</text>
</comment>
<comment type="function">
    <text evidence="1">The globular domain of the protein is located near the polypeptide exit tunnel on the outside of the subunit, while an extended beta-hairpin is found that lines the wall of the exit tunnel in the center of the 70S ribosome.</text>
</comment>
<comment type="subunit">
    <text evidence="1">Part of the 50S ribosomal subunit.</text>
</comment>
<comment type="similarity">
    <text evidence="1">Belongs to the universal ribosomal protein uL22 family.</text>
</comment>